<name>DADA_HELPX</name>
<keyword id="KW-0997">Cell inner membrane</keyword>
<keyword id="KW-1003">Cell membrane</keyword>
<keyword id="KW-0903">Direct protein sequencing</keyword>
<keyword id="KW-0249">Electron transport</keyword>
<keyword id="KW-0274">FAD</keyword>
<keyword id="KW-0285">Flavoprotein</keyword>
<keyword id="KW-0472">Membrane</keyword>
<keyword id="KW-0560">Oxidoreductase</keyword>
<keyword id="KW-0813">Transport</keyword>
<sequence>MKKEVVVIGGGIVGLSCAYSMHKLGHKVCVIEKSDGANGTSFGNAGLISAFKKAPLSCPGVVLDTLKLMLKNQAPLKFHFGLNLKLYQWILKFVKSANAKSTHRTMALFERYGWLSVDIYHQMLKDGMDFWYKEDGLLMIYTLEESFEKKLKTCDDSGAYKILSAKETKEYMPIVNDNICGSVLLTENAHVDPGEVMHSLQEYLQNAGVEFLYNEEVIDFEFKNNLIEGVITHKEKIQAETIILATGANPTLIKKTKNDFLMMGAKGYSITFKMPEELKPKTSSLFADIFMAMTPRRDTVRITSKLELNTNNALIDKEQIANMKKNLAAFTQPFEMKDAIEWCGFRPLTPNDIPYLGYDKRYKNLIHATGLGWLGITFGPAIGKIIANLSQDGANEKNADIMLFSAFFRD</sequence>
<reference key="1">
    <citation type="journal article" date="2010" name="Amino Acids">
        <title>D-Amino acid dehydrogenase from Helicobacter pylori NCTC 11637.</title>
        <authorList>
            <person name="Tanigawa M."/>
            <person name="Shinohara T."/>
            <person name="Saito M."/>
            <person name="Nishimura K."/>
            <person name="Hasegawa Y."/>
            <person name="Wakabayashi S."/>
            <person name="Ishizuka M."/>
            <person name="Nagata Y."/>
        </authorList>
    </citation>
    <scope>NUCLEOTIDE SEQUENCE [GENOMIC DNA]</scope>
    <scope>PROTEIN SEQUENCE OF 1-10 AND 193-197</scope>
    <scope>FUNCTION</scope>
    <scope>CATALYTIC ACTIVITY</scope>
    <scope>SUBSTRATE SPECIFICITY</scope>
    <scope>COFACTOR</scope>
    <scope>BIOPHYSICOCHEMICAL PROPERTIES</scope>
    <scope>ACTIVITY REGULATION</scope>
    <scope>SUBCELLULAR LOCATION</scope>
    <source>
        <strain>ATCC 43504 / NCTC 11637 / JCM 7653 / RPH 13487</strain>
    </source>
</reference>
<comment type="function">
    <text evidence="1">Catalyzes the oxidative deamination of D-amino acids. Has broad substrate specificity; is mostly active on D-proline, and to a lesser extent, on several other D-amino acids such as D-alanine, D-phenylalanine and D-serine. Mediates electron transport from D-proline to coenzyme Q1 in vitro, and is involved in the electron transport chain from D-proline to the c-type cytochrome in vivo.</text>
</comment>
<comment type="catalytic activity">
    <reaction evidence="1">
        <text>a D-alpha-amino acid + a quinone + H2O = a 2-oxocarboxylate + a quinol + NH4(+)</text>
        <dbReference type="Rhea" id="RHEA:45996"/>
        <dbReference type="ChEBI" id="CHEBI:15377"/>
        <dbReference type="ChEBI" id="CHEBI:24646"/>
        <dbReference type="ChEBI" id="CHEBI:28938"/>
        <dbReference type="ChEBI" id="CHEBI:35179"/>
        <dbReference type="ChEBI" id="CHEBI:59871"/>
        <dbReference type="ChEBI" id="CHEBI:132124"/>
        <dbReference type="EC" id="1.4.5.1"/>
    </reaction>
</comment>
<comment type="cofactor">
    <cofactor evidence="1">
        <name>FAD</name>
        <dbReference type="ChEBI" id="CHEBI:57692"/>
    </cofactor>
</comment>
<comment type="activity regulation">
    <text evidence="1">Activity is markedly inhibited by benzoate, and moderately by SH reagents such as p-hydroxymercuribenzoate, iodoacetamide, and iodoacetate.</text>
</comment>
<comment type="biophysicochemical properties">
    <kinetics>
        <KM evidence="1">40.2 mM for D-proline</KM>
        <KM evidence="1">60 mM for D-alanine</KM>
        <KM evidence="1">8.2 uM for coenzyme Q1</KM>
        <KM evidence="1">5.3 mM for DCIP</KM>
        <Vmax evidence="1">25.0 umol/min/mg enzyme with D-proline as the electron donor and coenzyme Q1 as the electron acceptor</Vmax>
        <Vmax evidence="1">18.3 umol/min/mg enzyme with D-alanine as the electron donor and coenzyme Q1 as the electron acceptor</Vmax>
        <Vmax evidence="1">4.5 umol/min/mg enzyme with D-proline as the electron donor and DCIP as the electron acceptor</Vmax>
    </kinetics>
    <phDependence>
        <text evidence="1">Optimum pH is 8.</text>
    </phDependence>
    <temperatureDependence>
        <text evidence="1">Optimum temperature is 37 degrees Celsius.</text>
    </temperatureDependence>
</comment>
<comment type="subcellular location">
    <subcellularLocation>
        <location evidence="1 3">Cell inner membrane</location>
        <topology evidence="3">Peripheral membrane protein</topology>
    </subcellularLocation>
</comment>
<comment type="similarity">
    <text evidence="3">Belongs to the DadA oxidoreductase family.</text>
</comment>
<protein>
    <recommendedName>
        <fullName evidence="2">D-amino acid dehydrogenase</fullName>
        <shortName evidence="2">DAD</shortName>
        <ecNumber evidence="1">1.4.5.1</ecNumber>
    </recommendedName>
</protein>
<evidence type="ECO:0000269" key="1">
    <source>
    </source>
</evidence>
<evidence type="ECO:0000303" key="2">
    <source>
    </source>
</evidence>
<evidence type="ECO:0000305" key="3"/>
<gene>
    <name evidence="2" type="primary">dadA</name>
</gene>
<organism>
    <name type="scientific">Helicobacter pylori</name>
    <name type="common">Campylobacter pylori</name>
    <dbReference type="NCBI Taxonomy" id="210"/>
    <lineage>
        <taxon>Bacteria</taxon>
        <taxon>Pseudomonadati</taxon>
        <taxon>Campylobacterota</taxon>
        <taxon>Epsilonproteobacteria</taxon>
        <taxon>Campylobacterales</taxon>
        <taxon>Helicobacteraceae</taxon>
        <taxon>Helicobacter</taxon>
    </lineage>
</organism>
<dbReference type="EC" id="1.4.5.1" evidence="1"/>
<dbReference type="EMBL" id="AB295062">
    <property type="protein sequence ID" value="BAF48065.1"/>
    <property type="molecule type" value="Genomic_DNA"/>
</dbReference>
<dbReference type="RefSeq" id="WP_000712537.1">
    <property type="nucleotide sequence ID" value="NZ_JBFTEE010000014.1"/>
</dbReference>
<dbReference type="SMR" id="A3KEZ1"/>
<dbReference type="KEGG" id="ag:BAF48065"/>
<dbReference type="eggNOG" id="COG0665">
    <property type="taxonomic scope" value="Bacteria"/>
</dbReference>
<dbReference type="BioCyc" id="MetaCyc:MONOMER-15373"/>
<dbReference type="BRENDA" id="1.4.5.1">
    <property type="organism ID" value="2604"/>
</dbReference>
<dbReference type="BRENDA" id="1.4.99.6">
    <property type="organism ID" value="2604"/>
</dbReference>
<dbReference type="GO" id="GO:0005737">
    <property type="term" value="C:cytoplasm"/>
    <property type="evidence" value="ECO:0007669"/>
    <property type="project" value="TreeGrafter"/>
</dbReference>
<dbReference type="GO" id="GO:0005886">
    <property type="term" value="C:plasma membrane"/>
    <property type="evidence" value="ECO:0007669"/>
    <property type="project" value="UniProtKB-SubCell"/>
</dbReference>
<dbReference type="GO" id="GO:0008718">
    <property type="term" value="F:D-amino-acid dehydrogenase activity"/>
    <property type="evidence" value="ECO:0007669"/>
    <property type="project" value="UniProtKB-EC"/>
</dbReference>
<dbReference type="Gene3D" id="3.30.9.10">
    <property type="entry name" value="D-Amino Acid Oxidase, subunit A, domain 2"/>
    <property type="match status" value="1"/>
</dbReference>
<dbReference type="Gene3D" id="3.50.50.60">
    <property type="entry name" value="FAD/NAD(P)-binding domain"/>
    <property type="match status" value="2"/>
</dbReference>
<dbReference type="InterPro" id="IPR006076">
    <property type="entry name" value="FAD-dep_OxRdtase"/>
</dbReference>
<dbReference type="InterPro" id="IPR036188">
    <property type="entry name" value="FAD/NAD-bd_sf"/>
</dbReference>
<dbReference type="PANTHER" id="PTHR13847:SF286">
    <property type="entry name" value="D-AMINO ACID DEHYDROGENASE"/>
    <property type="match status" value="1"/>
</dbReference>
<dbReference type="PANTHER" id="PTHR13847">
    <property type="entry name" value="SARCOSINE DEHYDROGENASE-RELATED"/>
    <property type="match status" value="1"/>
</dbReference>
<dbReference type="Pfam" id="PF01266">
    <property type="entry name" value="DAO"/>
    <property type="match status" value="1"/>
</dbReference>
<dbReference type="SUPFAM" id="SSF51905">
    <property type="entry name" value="FAD/NAD(P)-binding domain"/>
    <property type="match status" value="1"/>
</dbReference>
<accession>A3KEZ1</accession>
<proteinExistence type="evidence at protein level"/>
<feature type="chain" id="PRO_0000430690" description="D-amino acid dehydrogenase">
    <location>
        <begin position="1"/>
        <end position="410"/>
    </location>
</feature>
<feature type="binding site" evidence="2">
    <location>
        <begin position="9"/>
        <end position="14"/>
    </location>
    <ligand>
        <name>FAD</name>
        <dbReference type="ChEBI" id="CHEBI:57692"/>
    </ligand>
</feature>